<evidence type="ECO:0000255" key="1">
    <source>
        <dbReference type="HAMAP-Rule" id="MF_00418"/>
    </source>
</evidence>
<evidence type="ECO:0000305" key="2"/>
<organism>
    <name type="scientific">Vibrio vulnificus (strain CMCP6)</name>
    <dbReference type="NCBI Taxonomy" id="216895"/>
    <lineage>
        <taxon>Bacteria</taxon>
        <taxon>Pseudomonadati</taxon>
        <taxon>Pseudomonadota</taxon>
        <taxon>Gammaproteobacteria</taxon>
        <taxon>Vibrionales</taxon>
        <taxon>Vibrionaceae</taxon>
        <taxon>Vibrio</taxon>
    </lineage>
</organism>
<proteinExistence type="inferred from homology"/>
<comment type="function">
    <text evidence="1">Catalyzes the condensation of (S)-aspartate-beta-semialdehyde [(S)-ASA] and pyruvate to 4-hydroxy-tetrahydrodipicolinate (HTPA).</text>
</comment>
<comment type="catalytic activity">
    <reaction evidence="1">
        <text>L-aspartate 4-semialdehyde + pyruvate = (2S,4S)-4-hydroxy-2,3,4,5-tetrahydrodipicolinate + H2O + H(+)</text>
        <dbReference type="Rhea" id="RHEA:34171"/>
        <dbReference type="ChEBI" id="CHEBI:15361"/>
        <dbReference type="ChEBI" id="CHEBI:15377"/>
        <dbReference type="ChEBI" id="CHEBI:15378"/>
        <dbReference type="ChEBI" id="CHEBI:67139"/>
        <dbReference type="ChEBI" id="CHEBI:537519"/>
        <dbReference type="EC" id="4.3.3.7"/>
    </reaction>
</comment>
<comment type="pathway">
    <text evidence="1">Amino-acid biosynthesis; L-lysine biosynthesis via DAP pathway; (S)-tetrahydrodipicolinate from L-aspartate: step 3/4.</text>
</comment>
<comment type="subunit">
    <text evidence="1">Homotetramer; dimer of dimers.</text>
</comment>
<comment type="subcellular location">
    <subcellularLocation>
        <location evidence="1">Cytoplasm</location>
    </subcellularLocation>
</comment>
<comment type="similarity">
    <text evidence="1">Belongs to the DapA family.</text>
</comment>
<comment type="caution">
    <text evidence="2">Was originally thought to be a dihydrodipicolinate synthase (DHDPS), catalyzing the condensation of (S)-aspartate-beta-semialdehyde [(S)-ASA] and pyruvate to dihydrodipicolinate (DHDP). However, it was shown in E.coli that the product of the enzymatic reaction is not dihydrodipicolinate but in fact (4S)-4-hydroxy-2,3,4,5-tetrahydro-(2S)-dipicolinic acid (HTPA), and that the consecutive dehydration reaction leading to DHDP is not spontaneous but catalyzed by DapB.</text>
</comment>
<accession>Q8DBB0</accession>
<sequence length="292" mass="31433">MLSGSIVALLTPFKADGEVDFDGLQKLVEYHIAAGTNGIVAVGTTGESSTLTVEEHVKVVNKTVEFVNGRIPVIAGTGANATHESVTFSRLLNDSGIDACLSVTPYYNKPTQEGLFQHYKAIAEVSNVPQILYNVPGRTAVDLLPEPVARLAELENIVALKDATGDLNRVAIHRELCGEDFILLSGDDATGLDFVKLGGQGVISVTNNIAAKDMADMFRLALEGRFEEAEVINQRLMPLHKNLFIESSPIPVKWAATQLGLIECGHLRLPLTELSEKCHPIVAQAMTDAGIY</sequence>
<name>DAPA_VIBVU</name>
<reference key="1">
    <citation type="submission" date="2002-12" db="EMBL/GenBank/DDBJ databases">
        <title>Complete genome sequence of Vibrio vulnificus CMCP6.</title>
        <authorList>
            <person name="Rhee J.H."/>
            <person name="Kim S.Y."/>
            <person name="Chung S.S."/>
            <person name="Kim J.J."/>
            <person name="Moon Y.H."/>
            <person name="Jeong H."/>
            <person name="Choy H.E."/>
        </authorList>
    </citation>
    <scope>NUCLEOTIDE SEQUENCE [LARGE SCALE GENOMIC DNA]</scope>
    <source>
        <strain>CMCP6</strain>
    </source>
</reference>
<keyword id="KW-0028">Amino-acid biosynthesis</keyword>
<keyword id="KW-0963">Cytoplasm</keyword>
<keyword id="KW-0220">Diaminopimelate biosynthesis</keyword>
<keyword id="KW-0456">Lyase</keyword>
<keyword id="KW-0457">Lysine biosynthesis</keyword>
<keyword id="KW-0704">Schiff base</keyword>
<protein>
    <recommendedName>
        <fullName evidence="1">4-hydroxy-tetrahydrodipicolinate synthase</fullName>
        <shortName evidence="1">HTPA synthase</shortName>
        <ecNumber evidence="1">4.3.3.7</ecNumber>
    </recommendedName>
</protein>
<dbReference type="EC" id="4.3.3.7" evidence="1"/>
<dbReference type="EMBL" id="AE016795">
    <property type="protein sequence ID" value="AAO10313.1"/>
    <property type="molecule type" value="Genomic_DNA"/>
</dbReference>
<dbReference type="RefSeq" id="WP_011079812.1">
    <property type="nucleotide sequence ID" value="NC_004459.3"/>
</dbReference>
<dbReference type="SMR" id="Q8DBB0"/>
<dbReference type="KEGG" id="vvu:VV1_1912"/>
<dbReference type="HOGENOM" id="CLU_049343_7_1_6"/>
<dbReference type="UniPathway" id="UPA00034">
    <property type="reaction ID" value="UER00017"/>
</dbReference>
<dbReference type="Proteomes" id="UP000002275">
    <property type="component" value="Chromosome 1"/>
</dbReference>
<dbReference type="GO" id="GO:0005829">
    <property type="term" value="C:cytosol"/>
    <property type="evidence" value="ECO:0007669"/>
    <property type="project" value="TreeGrafter"/>
</dbReference>
<dbReference type="GO" id="GO:0008840">
    <property type="term" value="F:4-hydroxy-tetrahydrodipicolinate synthase activity"/>
    <property type="evidence" value="ECO:0007669"/>
    <property type="project" value="UniProtKB-UniRule"/>
</dbReference>
<dbReference type="GO" id="GO:0019877">
    <property type="term" value="P:diaminopimelate biosynthetic process"/>
    <property type="evidence" value="ECO:0007669"/>
    <property type="project" value="UniProtKB-UniRule"/>
</dbReference>
<dbReference type="GO" id="GO:0009089">
    <property type="term" value="P:lysine biosynthetic process via diaminopimelate"/>
    <property type="evidence" value="ECO:0007669"/>
    <property type="project" value="UniProtKB-UniRule"/>
</dbReference>
<dbReference type="CDD" id="cd00950">
    <property type="entry name" value="DHDPS"/>
    <property type="match status" value="1"/>
</dbReference>
<dbReference type="FunFam" id="3.20.20.70:FF:000046">
    <property type="entry name" value="4-hydroxy-tetrahydrodipicolinate synthase"/>
    <property type="match status" value="1"/>
</dbReference>
<dbReference type="Gene3D" id="3.20.20.70">
    <property type="entry name" value="Aldolase class I"/>
    <property type="match status" value="1"/>
</dbReference>
<dbReference type="HAMAP" id="MF_00418">
    <property type="entry name" value="DapA"/>
    <property type="match status" value="1"/>
</dbReference>
<dbReference type="InterPro" id="IPR013785">
    <property type="entry name" value="Aldolase_TIM"/>
</dbReference>
<dbReference type="InterPro" id="IPR005263">
    <property type="entry name" value="DapA"/>
</dbReference>
<dbReference type="InterPro" id="IPR002220">
    <property type="entry name" value="DapA-like"/>
</dbReference>
<dbReference type="InterPro" id="IPR020625">
    <property type="entry name" value="Schiff_base-form_aldolases_AS"/>
</dbReference>
<dbReference type="InterPro" id="IPR020624">
    <property type="entry name" value="Schiff_base-form_aldolases_CS"/>
</dbReference>
<dbReference type="NCBIfam" id="TIGR00674">
    <property type="entry name" value="dapA"/>
    <property type="match status" value="1"/>
</dbReference>
<dbReference type="PANTHER" id="PTHR12128:SF66">
    <property type="entry name" value="4-HYDROXY-2-OXOGLUTARATE ALDOLASE, MITOCHONDRIAL"/>
    <property type="match status" value="1"/>
</dbReference>
<dbReference type="PANTHER" id="PTHR12128">
    <property type="entry name" value="DIHYDRODIPICOLINATE SYNTHASE"/>
    <property type="match status" value="1"/>
</dbReference>
<dbReference type="Pfam" id="PF00701">
    <property type="entry name" value="DHDPS"/>
    <property type="match status" value="1"/>
</dbReference>
<dbReference type="PIRSF" id="PIRSF001365">
    <property type="entry name" value="DHDPS"/>
    <property type="match status" value="1"/>
</dbReference>
<dbReference type="PRINTS" id="PR00146">
    <property type="entry name" value="DHPICSNTHASE"/>
</dbReference>
<dbReference type="SMART" id="SM01130">
    <property type="entry name" value="DHDPS"/>
    <property type="match status" value="1"/>
</dbReference>
<dbReference type="SUPFAM" id="SSF51569">
    <property type="entry name" value="Aldolase"/>
    <property type="match status" value="1"/>
</dbReference>
<dbReference type="PROSITE" id="PS00665">
    <property type="entry name" value="DHDPS_1"/>
    <property type="match status" value="1"/>
</dbReference>
<dbReference type="PROSITE" id="PS00666">
    <property type="entry name" value="DHDPS_2"/>
    <property type="match status" value="1"/>
</dbReference>
<gene>
    <name evidence="1" type="primary">dapA</name>
    <name type="ordered locus">VV1_1912</name>
</gene>
<feature type="chain" id="PRO_0000103181" description="4-hydroxy-tetrahydrodipicolinate synthase">
    <location>
        <begin position="1"/>
        <end position="292"/>
    </location>
</feature>
<feature type="active site" description="Proton donor/acceptor" evidence="1">
    <location>
        <position position="133"/>
    </location>
</feature>
<feature type="active site" description="Schiff-base intermediate with substrate" evidence="1">
    <location>
        <position position="161"/>
    </location>
</feature>
<feature type="binding site" evidence="1">
    <location>
        <position position="45"/>
    </location>
    <ligand>
        <name>pyruvate</name>
        <dbReference type="ChEBI" id="CHEBI:15361"/>
    </ligand>
</feature>
<feature type="binding site" evidence="1">
    <location>
        <position position="203"/>
    </location>
    <ligand>
        <name>pyruvate</name>
        <dbReference type="ChEBI" id="CHEBI:15361"/>
    </ligand>
</feature>
<feature type="site" description="Part of a proton relay during catalysis" evidence="1">
    <location>
        <position position="44"/>
    </location>
</feature>
<feature type="site" description="Part of a proton relay during catalysis" evidence="1">
    <location>
        <position position="107"/>
    </location>
</feature>